<comment type="function">
    <text evidence="1">Probable phospholipase.</text>
</comment>
<comment type="subcellular location">
    <subcellularLocation>
        <location evidence="3">Secreted</location>
    </subcellularLocation>
</comment>
<comment type="similarity">
    <text evidence="3">Belongs to the phospholipase B-like family.</text>
</comment>
<dbReference type="EC" id="3.1.1.-"/>
<dbReference type="EMBL" id="AAFI02000006">
    <property type="protein sequence ID" value="EAL71895.1"/>
    <property type="molecule type" value="Genomic_DNA"/>
</dbReference>
<dbReference type="RefSeq" id="XP_645818.1">
    <property type="nucleotide sequence ID" value="XM_640726.1"/>
</dbReference>
<dbReference type="SMR" id="Q55BJ6"/>
<dbReference type="FunCoup" id="Q55BJ6">
    <property type="interactions" value="8"/>
</dbReference>
<dbReference type="STRING" id="44689.Q55BJ6"/>
<dbReference type="GlyCosmos" id="Q55BJ6">
    <property type="glycosylation" value="6 sites, No reported glycans"/>
</dbReference>
<dbReference type="GlyGen" id="Q55BJ6">
    <property type="glycosylation" value="6 sites"/>
</dbReference>
<dbReference type="PaxDb" id="44689-DDB0231377"/>
<dbReference type="EnsemblProtists" id="EAL71895">
    <property type="protein sequence ID" value="EAL71895"/>
    <property type="gene ID" value="DDB_G0271126"/>
</dbReference>
<dbReference type="GeneID" id="8617809"/>
<dbReference type="KEGG" id="ddi:DDB_G0271126"/>
<dbReference type="dictyBase" id="DDB_G0271126">
    <property type="gene designation" value="plbB"/>
</dbReference>
<dbReference type="VEuPathDB" id="AmoebaDB:DDB_G0271126"/>
<dbReference type="eggNOG" id="KOG3774">
    <property type="taxonomic scope" value="Eukaryota"/>
</dbReference>
<dbReference type="HOGENOM" id="CLU_027106_4_0_1"/>
<dbReference type="InParanoid" id="Q55BJ6"/>
<dbReference type="OMA" id="YQEGYWA"/>
<dbReference type="PhylomeDB" id="Q55BJ6"/>
<dbReference type="PRO" id="PR:Q55BJ6"/>
<dbReference type="Proteomes" id="UP000002195">
    <property type="component" value="Chromosome 2"/>
</dbReference>
<dbReference type="GO" id="GO:0005576">
    <property type="term" value="C:extracellular region"/>
    <property type="evidence" value="ECO:0000318"/>
    <property type="project" value="GO_Central"/>
</dbReference>
<dbReference type="GO" id="GO:0004620">
    <property type="term" value="F:phospholipase activity"/>
    <property type="evidence" value="ECO:0000250"/>
    <property type="project" value="dictyBase"/>
</dbReference>
<dbReference type="GO" id="GO:0046338">
    <property type="term" value="P:phosphatidylethanolamine catabolic process"/>
    <property type="evidence" value="ECO:0000250"/>
    <property type="project" value="dictyBase"/>
</dbReference>
<dbReference type="GO" id="GO:0031161">
    <property type="term" value="P:phosphatidylinositol catabolic process"/>
    <property type="evidence" value="ECO:0000250"/>
    <property type="project" value="dictyBase"/>
</dbReference>
<dbReference type="GO" id="GO:0009395">
    <property type="term" value="P:phospholipid catabolic process"/>
    <property type="evidence" value="ECO:0000250"/>
    <property type="project" value="dictyBase"/>
</dbReference>
<dbReference type="FunFam" id="3.60.60.30:FF:000001">
    <property type="entry name" value="Phospholipase B-like protein G"/>
    <property type="match status" value="1"/>
</dbReference>
<dbReference type="Gene3D" id="3.60.60.30">
    <property type="match status" value="1"/>
</dbReference>
<dbReference type="InterPro" id="IPR007000">
    <property type="entry name" value="PLipase_B-like"/>
</dbReference>
<dbReference type="PANTHER" id="PTHR12370:SF4">
    <property type="entry name" value="PHOSPHOLIPASE B-LIKE PROTEIN B-RELATED"/>
    <property type="match status" value="1"/>
</dbReference>
<dbReference type="PANTHER" id="PTHR12370">
    <property type="entry name" value="PHOSPHOLIPASE B-RELATED"/>
    <property type="match status" value="1"/>
</dbReference>
<dbReference type="Pfam" id="PF04916">
    <property type="entry name" value="Phospholip_B"/>
    <property type="match status" value="1"/>
</dbReference>
<keyword id="KW-0325">Glycoprotein</keyword>
<keyword id="KW-0378">Hydrolase</keyword>
<keyword id="KW-0442">Lipid degradation</keyword>
<keyword id="KW-0443">Lipid metabolism</keyword>
<keyword id="KW-1185">Reference proteome</keyword>
<keyword id="KW-0964">Secreted</keyword>
<keyword id="KW-0732">Signal</keyword>
<sequence>MNKLKSNFILNIVILFTILIFNINFINCENQKQQQHQQQQQQQQQQSSSTTTTLPIYSIKFSSETGFTIYSGNDSTSIAQSGFSNEMMTMGWAYLTITTNSQFEDSLQAEAAGYIEGYLTFEMIWQCWYNILVNEYQNQTIPNQVLNWANENIAYMKQQVATNENDPYWINIGLVLTQLSGMVDGYNAANQDPSRQLSFLDFILINMDADLGDISSTFNQSTSFSEISNFKKSMDHIKKTDHCSGLIKLTDDLTELYSAHTSWSSYINMLRIFKSYNFKFSSITNIKSKLTLFSGYPATIASLDDFYLLDTKLVVLETTNGLNNNDLYYLIKPESVLTWMRVIIANRLANGGQSWCETFERENSGTYNNQWMIVDYNKFVPGVKVRDGTLFVLEQVPGYIEFADVTNVLRTGYWPSYNIPYFETIFNMSGFNDELTDSSDYEAYEEDARSQIFRRDANKVYSLTDFQAIMRYNNFQNDPLSHGDAANQISSRFDLNSPDSQDYDAFGGVDSKVTSFSLVNQLLVIAQSGPTHDQEPPFQWSSANWSNIYPSIGMPNLYDFGWVNFTDISYNY</sequence>
<proteinExistence type="inferred from homology"/>
<evidence type="ECO:0000250" key="1"/>
<evidence type="ECO:0000255" key="2"/>
<evidence type="ECO:0000305" key="3"/>
<accession>Q55BJ6</accession>
<protein>
    <recommendedName>
        <fullName>Phospholipase B-like protein B</fullName>
        <ecNumber>3.1.1.-</ecNumber>
    </recommendedName>
</protein>
<name>PLBLB_DICDI</name>
<gene>
    <name type="primary">plbB</name>
    <name type="ORF">DDB_G0271126</name>
</gene>
<feature type="signal peptide" evidence="2">
    <location>
        <begin position="1"/>
        <end position="28"/>
    </location>
</feature>
<feature type="chain" id="PRO_0000286118" description="Phospholipase B-like protein B">
    <location>
        <begin position="29"/>
        <end position="572"/>
    </location>
</feature>
<feature type="glycosylation site" description="N-linked (GlcNAc...) asparagine" evidence="2">
    <location>
        <position position="73"/>
    </location>
</feature>
<feature type="glycosylation site" description="N-linked (GlcNAc...) asparagine" evidence="2">
    <location>
        <position position="138"/>
    </location>
</feature>
<feature type="glycosylation site" description="N-linked (GlcNAc...) asparagine" evidence="2">
    <location>
        <position position="219"/>
    </location>
</feature>
<feature type="glycosylation site" description="N-linked (GlcNAc...) asparagine" evidence="2">
    <location>
        <position position="427"/>
    </location>
</feature>
<feature type="glycosylation site" description="N-linked (GlcNAc...) asparagine" evidence="2">
    <location>
        <position position="544"/>
    </location>
</feature>
<feature type="glycosylation site" description="N-linked (GlcNAc...) asparagine" evidence="2">
    <location>
        <position position="564"/>
    </location>
</feature>
<organism>
    <name type="scientific">Dictyostelium discoideum</name>
    <name type="common">Social amoeba</name>
    <dbReference type="NCBI Taxonomy" id="44689"/>
    <lineage>
        <taxon>Eukaryota</taxon>
        <taxon>Amoebozoa</taxon>
        <taxon>Evosea</taxon>
        <taxon>Eumycetozoa</taxon>
        <taxon>Dictyostelia</taxon>
        <taxon>Dictyosteliales</taxon>
        <taxon>Dictyosteliaceae</taxon>
        <taxon>Dictyostelium</taxon>
    </lineage>
</organism>
<reference key="1">
    <citation type="journal article" date="2002" name="Nature">
        <title>Sequence and analysis of chromosome 2 of Dictyostelium discoideum.</title>
        <authorList>
            <person name="Gloeckner G."/>
            <person name="Eichinger L."/>
            <person name="Szafranski K."/>
            <person name="Pachebat J.A."/>
            <person name="Bankier A.T."/>
            <person name="Dear P.H."/>
            <person name="Lehmann R."/>
            <person name="Baumgart C."/>
            <person name="Parra G."/>
            <person name="Abril J.F."/>
            <person name="Guigo R."/>
            <person name="Kumpf K."/>
            <person name="Tunggal B."/>
            <person name="Cox E.C."/>
            <person name="Quail M.A."/>
            <person name="Platzer M."/>
            <person name="Rosenthal A."/>
            <person name="Noegel A.A."/>
        </authorList>
    </citation>
    <scope>NUCLEOTIDE SEQUENCE [LARGE SCALE GENOMIC DNA]</scope>
    <source>
        <strain>AX4</strain>
    </source>
</reference>
<reference key="2">
    <citation type="journal article" date="2005" name="Nature">
        <title>The genome of the social amoeba Dictyostelium discoideum.</title>
        <authorList>
            <person name="Eichinger L."/>
            <person name="Pachebat J.A."/>
            <person name="Gloeckner G."/>
            <person name="Rajandream M.A."/>
            <person name="Sucgang R."/>
            <person name="Berriman M."/>
            <person name="Song J."/>
            <person name="Olsen R."/>
            <person name="Szafranski K."/>
            <person name="Xu Q."/>
            <person name="Tunggal B."/>
            <person name="Kummerfeld S."/>
            <person name="Madera M."/>
            <person name="Konfortov B.A."/>
            <person name="Rivero F."/>
            <person name="Bankier A.T."/>
            <person name="Lehmann R."/>
            <person name="Hamlin N."/>
            <person name="Davies R."/>
            <person name="Gaudet P."/>
            <person name="Fey P."/>
            <person name="Pilcher K."/>
            <person name="Chen G."/>
            <person name="Saunders D."/>
            <person name="Sodergren E.J."/>
            <person name="Davis P."/>
            <person name="Kerhornou A."/>
            <person name="Nie X."/>
            <person name="Hall N."/>
            <person name="Anjard C."/>
            <person name="Hemphill L."/>
            <person name="Bason N."/>
            <person name="Farbrother P."/>
            <person name="Desany B."/>
            <person name="Just E."/>
            <person name="Morio T."/>
            <person name="Rost R."/>
            <person name="Churcher C.M."/>
            <person name="Cooper J."/>
            <person name="Haydock S."/>
            <person name="van Driessche N."/>
            <person name="Cronin A."/>
            <person name="Goodhead I."/>
            <person name="Muzny D.M."/>
            <person name="Mourier T."/>
            <person name="Pain A."/>
            <person name="Lu M."/>
            <person name="Harper D."/>
            <person name="Lindsay R."/>
            <person name="Hauser H."/>
            <person name="James K.D."/>
            <person name="Quiles M."/>
            <person name="Madan Babu M."/>
            <person name="Saito T."/>
            <person name="Buchrieser C."/>
            <person name="Wardroper A."/>
            <person name="Felder M."/>
            <person name="Thangavelu M."/>
            <person name="Johnson D."/>
            <person name="Knights A."/>
            <person name="Loulseged H."/>
            <person name="Mungall K.L."/>
            <person name="Oliver K."/>
            <person name="Price C."/>
            <person name="Quail M.A."/>
            <person name="Urushihara H."/>
            <person name="Hernandez J."/>
            <person name="Rabbinowitsch E."/>
            <person name="Steffen D."/>
            <person name="Sanders M."/>
            <person name="Ma J."/>
            <person name="Kohara Y."/>
            <person name="Sharp S."/>
            <person name="Simmonds M.N."/>
            <person name="Spiegler S."/>
            <person name="Tivey A."/>
            <person name="Sugano S."/>
            <person name="White B."/>
            <person name="Walker D."/>
            <person name="Woodward J.R."/>
            <person name="Winckler T."/>
            <person name="Tanaka Y."/>
            <person name="Shaulsky G."/>
            <person name="Schleicher M."/>
            <person name="Weinstock G.M."/>
            <person name="Rosenthal A."/>
            <person name="Cox E.C."/>
            <person name="Chisholm R.L."/>
            <person name="Gibbs R.A."/>
            <person name="Loomis W.F."/>
            <person name="Platzer M."/>
            <person name="Kay R.R."/>
            <person name="Williams J.G."/>
            <person name="Dear P.H."/>
            <person name="Noegel A.A."/>
            <person name="Barrell B.G."/>
            <person name="Kuspa A."/>
        </authorList>
    </citation>
    <scope>NUCLEOTIDE SEQUENCE [LARGE SCALE GENOMIC DNA]</scope>
    <source>
        <strain>AX4</strain>
    </source>
</reference>